<gene>
    <name evidence="1" type="primary">rbsA1</name>
    <name type="ordered locus">Bcen2424_1543</name>
</gene>
<sequence>MSRSESPRPLLEMRGISKTFPAVRALDNVSLTVYPGEIHSLMGENGAGKSTLMKILSGAYRADAGGEILIDGQRIEIDGPLAARDAGVAVIYQELCLSPNLTVAENIYVGRELRRGNRRWGTIDRAAMARGCQDVLARLGAPFGPDTLVDTLSIAEQQLVEIARAVHTRARILVMDEPTTPLSSRETEHLFRLIRQLREEGLAIIYISHRMAEIYELSDRVSVLRDGAYVGTLERASLSAERLVAMMVGRDISGFYKKEHAPYDPGHLLLSVRDIADGTRVRGCSLDLHAGEVLGIAGLVGAGRTELARLIFGAEPRVRGDVKLGERTFGAHSPRDAIDAGLVYLTEDRKRQGLFLDMSVRDNINISVCNRDARLGALDLARGAERARDAIASLSIRVPHANVNVGALSGGNQQKVLLSRLLETKPRVLILDEPTRGVDIGAKSEIYRIINELARAGVGVIVISSELPEIIGVADRVLVMREGEIAGELGGHTHTPITQEAIIALATGSQAELADAH</sequence>
<accession>A0K718</accession>
<reference key="1">
    <citation type="submission" date="2006-08" db="EMBL/GenBank/DDBJ databases">
        <title>Complete sequence of chromosome 1 of Burkholderia cenocepacia HI2424.</title>
        <authorList>
            <person name="Copeland A."/>
            <person name="Lucas S."/>
            <person name="Lapidus A."/>
            <person name="Barry K."/>
            <person name="Detter J.C."/>
            <person name="Glavina del Rio T."/>
            <person name="Hammon N."/>
            <person name="Israni S."/>
            <person name="Pitluck S."/>
            <person name="Chain P."/>
            <person name="Malfatti S."/>
            <person name="Shin M."/>
            <person name="Vergez L."/>
            <person name="Schmutz J."/>
            <person name="Larimer F."/>
            <person name="Land M."/>
            <person name="Hauser L."/>
            <person name="Kyrpides N."/>
            <person name="Kim E."/>
            <person name="LiPuma J.J."/>
            <person name="Gonzalez C.F."/>
            <person name="Konstantinidis K."/>
            <person name="Tiedje J.M."/>
            <person name="Richardson P."/>
        </authorList>
    </citation>
    <scope>NUCLEOTIDE SEQUENCE [LARGE SCALE GENOMIC DNA]</scope>
    <source>
        <strain>HI2424</strain>
    </source>
</reference>
<proteinExistence type="inferred from homology"/>
<dbReference type="EC" id="7.5.2.7" evidence="1"/>
<dbReference type="EMBL" id="CP000458">
    <property type="protein sequence ID" value="ABK08295.1"/>
    <property type="molecule type" value="Genomic_DNA"/>
</dbReference>
<dbReference type="RefSeq" id="WP_011545297.1">
    <property type="nucleotide sequence ID" value="NC_008542.1"/>
</dbReference>
<dbReference type="SMR" id="A0K718"/>
<dbReference type="KEGG" id="bch:Bcen2424_1543"/>
<dbReference type="HOGENOM" id="CLU_000604_92_3_4"/>
<dbReference type="GO" id="GO:0005886">
    <property type="term" value="C:plasma membrane"/>
    <property type="evidence" value="ECO:0007669"/>
    <property type="project" value="UniProtKB-SubCell"/>
</dbReference>
<dbReference type="GO" id="GO:0015611">
    <property type="term" value="F:ABC-type D-ribose transporter activity"/>
    <property type="evidence" value="ECO:0007669"/>
    <property type="project" value="UniProtKB-EC"/>
</dbReference>
<dbReference type="GO" id="GO:0005524">
    <property type="term" value="F:ATP binding"/>
    <property type="evidence" value="ECO:0007669"/>
    <property type="project" value="UniProtKB-KW"/>
</dbReference>
<dbReference type="GO" id="GO:0016887">
    <property type="term" value="F:ATP hydrolysis activity"/>
    <property type="evidence" value="ECO:0007669"/>
    <property type="project" value="InterPro"/>
</dbReference>
<dbReference type="CDD" id="cd03216">
    <property type="entry name" value="ABC_Carb_Monos_I"/>
    <property type="match status" value="1"/>
</dbReference>
<dbReference type="CDD" id="cd03215">
    <property type="entry name" value="ABC_Carb_Monos_II"/>
    <property type="match status" value="1"/>
</dbReference>
<dbReference type="FunFam" id="3.40.50.300:FF:000127">
    <property type="entry name" value="Ribose import ATP-binding protein RbsA"/>
    <property type="match status" value="1"/>
</dbReference>
<dbReference type="Gene3D" id="3.40.50.300">
    <property type="entry name" value="P-loop containing nucleotide triphosphate hydrolases"/>
    <property type="match status" value="2"/>
</dbReference>
<dbReference type="InterPro" id="IPR003593">
    <property type="entry name" value="AAA+_ATPase"/>
</dbReference>
<dbReference type="InterPro" id="IPR050107">
    <property type="entry name" value="ABC_carbohydrate_import_ATPase"/>
</dbReference>
<dbReference type="InterPro" id="IPR003439">
    <property type="entry name" value="ABC_transporter-like_ATP-bd"/>
</dbReference>
<dbReference type="InterPro" id="IPR017871">
    <property type="entry name" value="ABC_transporter-like_CS"/>
</dbReference>
<dbReference type="InterPro" id="IPR027417">
    <property type="entry name" value="P-loop_NTPase"/>
</dbReference>
<dbReference type="PANTHER" id="PTHR43790">
    <property type="entry name" value="CARBOHYDRATE TRANSPORT ATP-BINDING PROTEIN MG119-RELATED"/>
    <property type="match status" value="1"/>
</dbReference>
<dbReference type="PANTHER" id="PTHR43790:SF3">
    <property type="entry name" value="D-ALLOSE IMPORT ATP-BINDING PROTEIN ALSA-RELATED"/>
    <property type="match status" value="1"/>
</dbReference>
<dbReference type="Pfam" id="PF00005">
    <property type="entry name" value="ABC_tran"/>
    <property type="match status" value="2"/>
</dbReference>
<dbReference type="SMART" id="SM00382">
    <property type="entry name" value="AAA"/>
    <property type="match status" value="2"/>
</dbReference>
<dbReference type="SUPFAM" id="SSF52540">
    <property type="entry name" value="P-loop containing nucleoside triphosphate hydrolases"/>
    <property type="match status" value="2"/>
</dbReference>
<dbReference type="PROSITE" id="PS00211">
    <property type="entry name" value="ABC_TRANSPORTER_1"/>
    <property type="match status" value="1"/>
</dbReference>
<dbReference type="PROSITE" id="PS50893">
    <property type="entry name" value="ABC_TRANSPORTER_2"/>
    <property type="match status" value="2"/>
</dbReference>
<dbReference type="PROSITE" id="PS51254">
    <property type="entry name" value="RBSA"/>
    <property type="match status" value="1"/>
</dbReference>
<feature type="chain" id="PRO_0000277511" description="Ribose import ATP-binding protein RbsA 1">
    <location>
        <begin position="1"/>
        <end position="517"/>
    </location>
</feature>
<feature type="domain" description="ABC transporter 1" evidence="1">
    <location>
        <begin position="11"/>
        <end position="251"/>
    </location>
</feature>
<feature type="domain" description="ABC transporter 2" evidence="1">
    <location>
        <begin position="263"/>
        <end position="507"/>
    </location>
</feature>
<feature type="binding site" evidence="1">
    <location>
        <begin position="43"/>
        <end position="50"/>
    </location>
    <ligand>
        <name>ATP</name>
        <dbReference type="ChEBI" id="CHEBI:30616"/>
    </ligand>
</feature>
<evidence type="ECO:0000255" key="1">
    <source>
        <dbReference type="HAMAP-Rule" id="MF_01716"/>
    </source>
</evidence>
<organism>
    <name type="scientific">Burkholderia cenocepacia (strain HI2424)</name>
    <dbReference type="NCBI Taxonomy" id="331272"/>
    <lineage>
        <taxon>Bacteria</taxon>
        <taxon>Pseudomonadati</taxon>
        <taxon>Pseudomonadota</taxon>
        <taxon>Betaproteobacteria</taxon>
        <taxon>Burkholderiales</taxon>
        <taxon>Burkholderiaceae</taxon>
        <taxon>Burkholderia</taxon>
        <taxon>Burkholderia cepacia complex</taxon>
    </lineage>
</organism>
<keyword id="KW-0067">ATP-binding</keyword>
<keyword id="KW-0997">Cell inner membrane</keyword>
<keyword id="KW-1003">Cell membrane</keyword>
<keyword id="KW-0472">Membrane</keyword>
<keyword id="KW-0547">Nucleotide-binding</keyword>
<keyword id="KW-0677">Repeat</keyword>
<keyword id="KW-0762">Sugar transport</keyword>
<keyword id="KW-1278">Translocase</keyword>
<keyword id="KW-0813">Transport</keyword>
<comment type="function">
    <text evidence="1">Part of the ABC transporter complex RbsABC involved in ribose import. Responsible for energy coupling to the transport system.</text>
</comment>
<comment type="catalytic activity">
    <reaction evidence="1">
        <text>D-ribose(out) + ATP + H2O = D-ribose(in) + ADP + phosphate + H(+)</text>
        <dbReference type="Rhea" id="RHEA:29903"/>
        <dbReference type="ChEBI" id="CHEBI:15377"/>
        <dbReference type="ChEBI" id="CHEBI:15378"/>
        <dbReference type="ChEBI" id="CHEBI:30616"/>
        <dbReference type="ChEBI" id="CHEBI:43474"/>
        <dbReference type="ChEBI" id="CHEBI:47013"/>
        <dbReference type="ChEBI" id="CHEBI:456216"/>
        <dbReference type="EC" id="7.5.2.7"/>
    </reaction>
</comment>
<comment type="subunit">
    <text evidence="1">The complex is composed of an ATP-binding protein (RbsA), two transmembrane proteins (RbsC) and a solute-binding protein (RbsB).</text>
</comment>
<comment type="subcellular location">
    <subcellularLocation>
        <location evidence="1">Cell inner membrane</location>
        <topology evidence="1">Peripheral membrane protein</topology>
    </subcellularLocation>
</comment>
<comment type="similarity">
    <text evidence="1">Belongs to the ABC transporter superfamily. Ribose importer (TC 3.A.1.2.1) family.</text>
</comment>
<protein>
    <recommendedName>
        <fullName evidence="1">Ribose import ATP-binding protein RbsA 1</fullName>
        <ecNumber evidence="1">7.5.2.7</ecNumber>
    </recommendedName>
</protein>
<name>RBSA1_BURCH</name>